<protein>
    <recommendedName>
        <fullName evidence="1">Monoglyceride lipase homolog</fullName>
    </recommendedName>
</protein>
<organismHost>
    <name type="scientific">Cynomys gunnisoni</name>
    <name type="common">Gunnison's prairie dog</name>
    <name type="synonym">Spermophilus gunnisoni</name>
    <dbReference type="NCBI Taxonomy" id="45479"/>
</organismHost>
<organismHost>
    <name type="scientific">Cynomys leucurus</name>
    <name type="common">White-tailed prairie dog</name>
    <dbReference type="NCBI Taxonomy" id="99825"/>
</organismHost>
<organismHost>
    <name type="scientific">Cynomys ludovicianus</name>
    <name type="common">Black-tailed prairie dog</name>
    <dbReference type="NCBI Taxonomy" id="45480"/>
</organismHost>
<organismHost>
    <name type="scientific">Cynomys mexicanus</name>
    <name type="common">Mexican prairie dog</name>
    <dbReference type="NCBI Taxonomy" id="99826"/>
</organismHost>
<organismHost>
    <name type="scientific">Cynomys parvidens</name>
    <name type="common">Utah prairie dog</name>
    <dbReference type="NCBI Taxonomy" id="99827"/>
</organismHost>
<organismHost>
    <name type="scientific">Gliridae</name>
    <name type="common">dormice</name>
    <dbReference type="NCBI Taxonomy" id="30650"/>
</organismHost>
<organismHost>
    <name type="scientific">Heliosciurus ruwenzorii</name>
    <name type="common">Ruwenzori sun squirrel</name>
    <dbReference type="NCBI Taxonomy" id="226685"/>
</organismHost>
<organismHost>
    <name type="scientific">Homo sapiens</name>
    <name type="common">Human</name>
    <dbReference type="NCBI Taxonomy" id="9606"/>
</organismHost>
<organismHost>
    <name type="scientific">Mus musculus</name>
    <name type="common">Mouse</name>
    <dbReference type="NCBI Taxonomy" id="10090"/>
</organismHost>
<organism>
    <name type="scientific">Monkeypox virus</name>
    <dbReference type="NCBI Taxonomy" id="10244"/>
    <lineage>
        <taxon>Viruses</taxon>
        <taxon>Varidnaviria</taxon>
        <taxon>Bamfordvirae</taxon>
        <taxon>Nucleocytoviricota</taxon>
        <taxon>Pokkesviricetes</taxon>
        <taxon>Chitovirales</taxon>
        <taxon>Poxviridae</taxon>
        <taxon>Chordopoxvirinae</taxon>
        <taxon>Orthopoxvirus</taxon>
    </lineage>
</organism>
<feature type="chain" id="PRO_0000457206" description="Monoglyceride lipase homolog">
    <location>
        <begin position="1"/>
        <end position="276"/>
    </location>
</feature>
<proteinExistence type="inferred from homology"/>
<sequence>MSTNCMFNLDNDYIYCKYWKPITYPKALVFISHGAGEHSGRYDELAENISSLGILVFSHDHIGHGRSNGEKMMIDDFGKYVRDVVQHVVTIKSTYPGVPVFLLGHSMGATISILAACDNPNLFTAMILMSPLVNADAVPRLNLLAAKLMGTITPNASVGKLCPESVSRDMDEVYKYQYDPLVNHEKIKAGFASQVLKATNKVRKIIPKINTPTLILQGTNNEISDVSGAYYFMQHANCNREIKIYEGAKHHLHKETDEVKKSVMKEIETWIFNRVK</sequence>
<name>PG043_MONPV</name>
<gene>
    <name type="primary">OPG043</name>
    <name type="ORF">C5L</name>
    <name type="ORF">K5L</name>
    <name type="ORF">K6L</name>
    <name type="ORF">MPXVgp031</name>
</gene>
<keyword id="KW-1185">Reference proteome</keyword>
<accession>A0A7H0DN16</accession>
<comment type="similarity">
    <text evidence="1">Belongs to the orthopoxvirus OPG043 family.</text>
</comment>
<reference key="1">
    <citation type="journal article" date="2022" name="J. Infect. Dis.">
        <title>Exportation of Monkeypox virus from the African continent.</title>
        <authorList>
            <person name="Mauldin M.R."/>
            <person name="McCollum A.M."/>
            <person name="Nakazawa Y.J."/>
            <person name="Mandra A."/>
            <person name="Whitehouse E.R."/>
            <person name="Davidson W."/>
            <person name="Zhao H."/>
            <person name="Gao J."/>
            <person name="Li Y."/>
            <person name="Doty J."/>
            <person name="Yinka-Ogunleye A."/>
            <person name="Akinpelu A."/>
            <person name="Aruna O."/>
            <person name="Naidoo D."/>
            <person name="Lewandowski K."/>
            <person name="Afrough B."/>
            <person name="Graham V."/>
            <person name="Aarons E."/>
            <person name="Hewson R."/>
            <person name="Vipond R."/>
            <person name="Dunning J."/>
            <person name="Chand M."/>
            <person name="Brown C."/>
            <person name="Cohen-Gihon I."/>
            <person name="Erez N."/>
            <person name="Shifman O."/>
            <person name="Israeli O."/>
            <person name="Sharon M."/>
            <person name="Schwartz E."/>
            <person name="Beth-Din A."/>
            <person name="Zvi A."/>
            <person name="Mak T.M."/>
            <person name="Ng Y.K."/>
            <person name="Cui L."/>
            <person name="Lin R.T.P."/>
            <person name="Olson V.A."/>
            <person name="Brooks T."/>
            <person name="Paran N."/>
            <person name="Ihekweazu C."/>
            <person name="Reynolds M.G."/>
        </authorList>
    </citation>
    <scope>NUCLEOTIDE SEQUENCE [LARGE SCALE GENOMIC DNA]</scope>
    <source>
        <strain>MPXV-M5312_HM12_Rivers</strain>
    </source>
</reference>
<dbReference type="EMBL" id="MT903340">
    <property type="protein sequence ID" value="QNP12899.1"/>
    <property type="molecule type" value="Genomic_DNA"/>
</dbReference>
<dbReference type="RefSeq" id="YP_010377026.1">
    <property type="nucleotide sequence ID" value="NC_063383.1"/>
</dbReference>
<dbReference type="SMR" id="A0A7H0DN16"/>
<dbReference type="GeneID" id="72551439"/>
<dbReference type="Proteomes" id="UP000516359">
    <property type="component" value="Genome"/>
</dbReference>
<dbReference type="FunFam" id="3.40.50.1820:FF:000117">
    <property type="entry name" value="Monoglyceride lipase, putative"/>
    <property type="match status" value="1"/>
</dbReference>
<dbReference type="Gene3D" id="3.40.50.1820">
    <property type="entry name" value="alpha/beta hydrolase"/>
    <property type="match status" value="1"/>
</dbReference>
<dbReference type="InterPro" id="IPR000073">
    <property type="entry name" value="AB_hydrolase_1"/>
</dbReference>
<dbReference type="InterPro" id="IPR029058">
    <property type="entry name" value="AB_hydrolase_fold"/>
</dbReference>
<dbReference type="InterPro" id="IPR022742">
    <property type="entry name" value="Hydrolase_4"/>
</dbReference>
<dbReference type="InterPro" id="IPR051044">
    <property type="entry name" value="MAG_DAG_Lipase"/>
</dbReference>
<dbReference type="PANTHER" id="PTHR11614">
    <property type="entry name" value="PHOSPHOLIPASE-RELATED"/>
    <property type="match status" value="1"/>
</dbReference>
<dbReference type="Pfam" id="PF12146">
    <property type="entry name" value="Hydrolase_4"/>
    <property type="match status" value="1"/>
</dbReference>
<dbReference type="PRINTS" id="PR00111">
    <property type="entry name" value="ABHYDROLASE"/>
</dbReference>
<dbReference type="SUPFAM" id="SSF53474">
    <property type="entry name" value="alpha/beta-Hydrolases"/>
    <property type="match status" value="1"/>
</dbReference>
<evidence type="ECO:0000305" key="1"/>